<evidence type="ECO:0000255" key="1">
    <source>
        <dbReference type="HAMAP-Rule" id="MF_00169"/>
    </source>
</evidence>
<dbReference type="EC" id="4.2.1.10" evidence="1"/>
<dbReference type="EMBL" id="CP000155">
    <property type="protein sequence ID" value="ABC32654.1"/>
    <property type="molecule type" value="Genomic_DNA"/>
</dbReference>
<dbReference type="RefSeq" id="WP_011399712.1">
    <property type="nucleotide sequence ID" value="NC_007645.1"/>
</dbReference>
<dbReference type="SMR" id="Q2S9M0"/>
<dbReference type="STRING" id="349521.HCH_06004"/>
<dbReference type="KEGG" id="hch:HCH_06004"/>
<dbReference type="eggNOG" id="COG0757">
    <property type="taxonomic scope" value="Bacteria"/>
</dbReference>
<dbReference type="HOGENOM" id="CLU_090968_1_0_6"/>
<dbReference type="OrthoDB" id="9790793at2"/>
<dbReference type="UniPathway" id="UPA00053">
    <property type="reaction ID" value="UER00086"/>
</dbReference>
<dbReference type="Proteomes" id="UP000000238">
    <property type="component" value="Chromosome"/>
</dbReference>
<dbReference type="GO" id="GO:0003855">
    <property type="term" value="F:3-dehydroquinate dehydratase activity"/>
    <property type="evidence" value="ECO:0007669"/>
    <property type="project" value="UniProtKB-UniRule"/>
</dbReference>
<dbReference type="GO" id="GO:0008652">
    <property type="term" value="P:amino acid biosynthetic process"/>
    <property type="evidence" value="ECO:0007669"/>
    <property type="project" value="UniProtKB-KW"/>
</dbReference>
<dbReference type="GO" id="GO:0009073">
    <property type="term" value="P:aromatic amino acid family biosynthetic process"/>
    <property type="evidence" value="ECO:0007669"/>
    <property type="project" value="UniProtKB-KW"/>
</dbReference>
<dbReference type="GO" id="GO:0009423">
    <property type="term" value="P:chorismate biosynthetic process"/>
    <property type="evidence" value="ECO:0007669"/>
    <property type="project" value="UniProtKB-UniRule"/>
</dbReference>
<dbReference type="GO" id="GO:0019631">
    <property type="term" value="P:quinate catabolic process"/>
    <property type="evidence" value="ECO:0007669"/>
    <property type="project" value="TreeGrafter"/>
</dbReference>
<dbReference type="CDD" id="cd00466">
    <property type="entry name" value="DHQase_II"/>
    <property type="match status" value="1"/>
</dbReference>
<dbReference type="Gene3D" id="3.40.50.9100">
    <property type="entry name" value="Dehydroquinase, class II"/>
    <property type="match status" value="1"/>
</dbReference>
<dbReference type="HAMAP" id="MF_00169">
    <property type="entry name" value="AroQ"/>
    <property type="match status" value="1"/>
</dbReference>
<dbReference type="InterPro" id="IPR001874">
    <property type="entry name" value="DHquinase_II"/>
</dbReference>
<dbReference type="InterPro" id="IPR018509">
    <property type="entry name" value="DHquinase_II_CS"/>
</dbReference>
<dbReference type="InterPro" id="IPR036441">
    <property type="entry name" value="DHquinase_II_sf"/>
</dbReference>
<dbReference type="NCBIfam" id="TIGR01088">
    <property type="entry name" value="aroQ"/>
    <property type="match status" value="1"/>
</dbReference>
<dbReference type="NCBIfam" id="NF003804">
    <property type="entry name" value="PRK05395.1-1"/>
    <property type="match status" value="1"/>
</dbReference>
<dbReference type="NCBIfam" id="NF003805">
    <property type="entry name" value="PRK05395.1-2"/>
    <property type="match status" value="1"/>
</dbReference>
<dbReference type="NCBIfam" id="NF003806">
    <property type="entry name" value="PRK05395.1-3"/>
    <property type="match status" value="1"/>
</dbReference>
<dbReference type="NCBIfam" id="NF003807">
    <property type="entry name" value="PRK05395.1-4"/>
    <property type="match status" value="1"/>
</dbReference>
<dbReference type="PANTHER" id="PTHR21272">
    <property type="entry name" value="CATABOLIC 3-DEHYDROQUINASE"/>
    <property type="match status" value="1"/>
</dbReference>
<dbReference type="PANTHER" id="PTHR21272:SF3">
    <property type="entry name" value="CATABOLIC 3-DEHYDROQUINASE"/>
    <property type="match status" value="1"/>
</dbReference>
<dbReference type="Pfam" id="PF01220">
    <property type="entry name" value="DHquinase_II"/>
    <property type="match status" value="1"/>
</dbReference>
<dbReference type="PIRSF" id="PIRSF001399">
    <property type="entry name" value="DHquinase_II"/>
    <property type="match status" value="1"/>
</dbReference>
<dbReference type="SUPFAM" id="SSF52304">
    <property type="entry name" value="Type II 3-dehydroquinate dehydratase"/>
    <property type="match status" value="1"/>
</dbReference>
<dbReference type="PROSITE" id="PS01029">
    <property type="entry name" value="DEHYDROQUINASE_II"/>
    <property type="match status" value="1"/>
</dbReference>
<accession>Q2S9M0</accession>
<reference key="1">
    <citation type="journal article" date="2005" name="Nucleic Acids Res.">
        <title>Genomic blueprint of Hahella chejuensis, a marine microbe producing an algicidal agent.</title>
        <authorList>
            <person name="Jeong H."/>
            <person name="Yim J.H."/>
            <person name="Lee C."/>
            <person name="Choi S.-H."/>
            <person name="Park Y.K."/>
            <person name="Yoon S.H."/>
            <person name="Hur C.-G."/>
            <person name="Kang H.-Y."/>
            <person name="Kim D."/>
            <person name="Lee H.H."/>
            <person name="Park K.H."/>
            <person name="Park S.-H."/>
            <person name="Park H.-S."/>
            <person name="Lee H.K."/>
            <person name="Oh T.K."/>
            <person name="Kim J.F."/>
        </authorList>
    </citation>
    <scope>NUCLEOTIDE SEQUENCE [LARGE SCALE GENOMIC DNA]</scope>
    <source>
        <strain>KCTC 2396</strain>
    </source>
</reference>
<keyword id="KW-0028">Amino-acid biosynthesis</keyword>
<keyword id="KW-0057">Aromatic amino acid biosynthesis</keyword>
<keyword id="KW-0456">Lyase</keyword>
<keyword id="KW-1185">Reference proteome</keyword>
<protein>
    <recommendedName>
        <fullName evidence="1">3-dehydroquinate dehydratase</fullName>
        <shortName evidence="1">3-dehydroquinase</shortName>
        <ecNumber evidence="1">4.2.1.10</ecNumber>
    </recommendedName>
    <alternativeName>
        <fullName evidence="1">Type II DHQase</fullName>
    </alternativeName>
</protein>
<comment type="function">
    <text evidence="1">Catalyzes a trans-dehydration via an enolate intermediate.</text>
</comment>
<comment type="catalytic activity">
    <reaction evidence="1">
        <text>3-dehydroquinate = 3-dehydroshikimate + H2O</text>
        <dbReference type="Rhea" id="RHEA:21096"/>
        <dbReference type="ChEBI" id="CHEBI:15377"/>
        <dbReference type="ChEBI" id="CHEBI:16630"/>
        <dbReference type="ChEBI" id="CHEBI:32364"/>
        <dbReference type="EC" id="4.2.1.10"/>
    </reaction>
</comment>
<comment type="pathway">
    <text evidence="1">Metabolic intermediate biosynthesis; chorismate biosynthesis; chorismate from D-erythrose 4-phosphate and phosphoenolpyruvate: step 3/7.</text>
</comment>
<comment type="subunit">
    <text evidence="1">Homododecamer.</text>
</comment>
<comment type="similarity">
    <text evidence="1">Belongs to the type-II 3-dehydroquinase family.</text>
</comment>
<gene>
    <name evidence="1" type="primary">aroQ</name>
    <name type="ordered locus">HCH_06004</name>
</gene>
<organism>
    <name type="scientific">Hahella chejuensis (strain KCTC 2396)</name>
    <dbReference type="NCBI Taxonomy" id="349521"/>
    <lineage>
        <taxon>Bacteria</taxon>
        <taxon>Pseudomonadati</taxon>
        <taxon>Pseudomonadota</taxon>
        <taxon>Gammaproteobacteria</taxon>
        <taxon>Oceanospirillales</taxon>
        <taxon>Hahellaceae</taxon>
        <taxon>Hahella</taxon>
    </lineage>
</organism>
<feature type="chain" id="PRO_1000023472" description="3-dehydroquinate dehydratase">
    <location>
        <begin position="1"/>
        <end position="147"/>
    </location>
</feature>
<feature type="active site" description="Proton acceptor" evidence="1">
    <location>
        <position position="23"/>
    </location>
</feature>
<feature type="active site" description="Proton donor" evidence="1">
    <location>
        <position position="101"/>
    </location>
</feature>
<feature type="binding site" evidence="1">
    <location>
        <position position="75"/>
    </location>
    <ligand>
        <name>substrate</name>
    </ligand>
</feature>
<feature type="binding site" evidence="1">
    <location>
        <position position="81"/>
    </location>
    <ligand>
        <name>substrate</name>
    </ligand>
</feature>
<feature type="binding site" evidence="1">
    <location>
        <position position="88"/>
    </location>
    <ligand>
        <name>substrate</name>
    </ligand>
</feature>
<feature type="binding site" evidence="1">
    <location>
        <begin position="102"/>
        <end position="103"/>
    </location>
    <ligand>
        <name>substrate</name>
    </ligand>
</feature>
<feature type="binding site" evidence="1">
    <location>
        <position position="112"/>
    </location>
    <ligand>
        <name>substrate</name>
    </ligand>
</feature>
<feature type="site" description="Transition state stabilizer" evidence="1">
    <location>
        <position position="18"/>
    </location>
</feature>
<name>AROQ_HAHCH</name>
<sequence>MASILVLHGPNLNLLGTREPEIYGAETLDDINFRLTETARQAGHHLLTLQSNAEYELIDRIHEAKKEGVDFIIINPAAFTHTSVALRDALLGVGIPFIETHLSNVHAREAFRHHSYFSDVAVGVICGFGSQSYELALQAAFSKITGK</sequence>
<proteinExistence type="inferred from homology"/>